<comment type="function">
    <text evidence="2">Catalyzes the ATP-dependent phosphorylation of 2-deoxy-D-ribose to 2-deoxy-D-ribose 5-phosphate (dRib-5P), allowing the use of deoxyribose as the sole carbon source (PubMed:10648508). Can also use D-ribose, with much lower efficiency (PubMed:10648508).</text>
</comment>
<comment type="catalytic activity">
    <reaction evidence="1 2">
        <text>2-deoxy-D-ribose + ATP = 2-deoxy-D-ribose 5-phosphate + ADP + H(+)</text>
        <dbReference type="Rhea" id="RHEA:30871"/>
        <dbReference type="ChEBI" id="CHEBI:15378"/>
        <dbReference type="ChEBI" id="CHEBI:30616"/>
        <dbReference type="ChEBI" id="CHEBI:62877"/>
        <dbReference type="ChEBI" id="CHEBI:90761"/>
        <dbReference type="ChEBI" id="CHEBI:456216"/>
        <dbReference type="EC" id="2.7.1.229"/>
    </reaction>
    <physiologicalReaction direction="left-to-right" evidence="2">
        <dbReference type="Rhea" id="RHEA:30872"/>
    </physiologicalReaction>
</comment>
<comment type="cofactor">
    <cofactor evidence="1">
        <name>Mg(2+)</name>
        <dbReference type="ChEBI" id="CHEBI:18420"/>
    </cofactor>
</comment>
<comment type="biophysicochemical properties">
    <kinetics>
        <KM evidence="2">0.1 mM for 2-deoxy-D-ribose</KM>
        <KM evidence="2">2 mM for D-ribose</KM>
    </kinetics>
</comment>
<comment type="subunit">
    <text evidence="1">Homodimer.</text>
</comment>
<comment type="subcellular location">
    <subcellularLocation>
        <location evidence="1">Cytoplasm</location>
    </subcellularLocation>
</comment>
<comment type="domain">
    <text evidence="2">Met-10, which corresponds to Asn-14 in E.coli ribokinase, is a key residue differentiating ribose and deoxyribose.</text>
</comment>
<comment type="miscellaneous">
    <text evidence="2">Located in the deoQKPX locus, involved in 2-deoxy-D-ribose utilization (PubMed:10648508). This locus is absent in E.coli K12 (PubMed:10648508).</text>
</comment>
<comment type="similarity">
    <text evidence="1">Belongs to the carbohydrate kinase PfkB family. Deoxyribokinase subfamily.</text>
</comment>
<protein>
    <recommendedName>
        <fullName evidence="1 3">Deoxyribokinase</fullName>
        <shortName evidence="1 3">dRK</shortName>
        <ecNumber evidence="1 2">2.7.1.229</ecNumber>
    </recommendedName>
    <alternativeName>
        <fullName evidence="1 4">ATP:2-deoxy-D-ribose 5-phosphotransferase</fullName>
    </alternativeName>
</protein>
<sequence length="306" mass="33229">MDIAVIGSNMVDLITYTNQMPKEGETLEAPAFKIGCGGKGANQAVAAAKLNSKVLMLTKVGDDIFADNTIRNLESWGINTTYVEKVPCTSSGVAPIFVNANSSNSILIIKGANKFLSPEDIDRAAEDLKKCQLIVLQLEVQLETVYHAIEFGKKHGIEVLLNPAPALRELDMSYACKCDFFVPNETELEILTGMPVDTYDHIRAAARSLVDKGLNNIIVTMGEKGALWMTRDQEVHVPAFRVNAVDTSGAGDAFIGCFAHYYVQSGDVEAAMKKAVLFAAFSVTGKGTQSSYPSIEQFNEYLSLNE</sequence>
<evidence type="ECO:0000255" key="1">
    <source>
        <dbReference type="HAMAP-Rule" id="MF_01987"/>
    </source>
</evidence>
<evidence type="ECO:0000269" key="2">
    <source>
    </source>
</evidence>
<evidence type="ECO:0000303" key="3">
    <source>
    </source>
</evidence>
<evidence type="ECO:0000305" key="4"/>
<evidence type="ECO:0000312" key="5">
    <source>
        <dbReference type="EMBL" id="AAO71218.1"/>
    </source>
</evidence>
<name>DEOK_SALTI</name>
<reference key="1">
    <citation type="journal article" date="2003" name="J. Bacteriol.">
        <title>Comparative genomics of Salmonella enterica serovar Typhi strains Ty2 and CT18.</title>
        <authorList>
            <person name="Deng W."/>
            <person name="Liou S.-R."/>
            <person name="Plunkett G. III"/>
            <person name="Mayhew G.F."/>
            <person name="Rose D.J."/>
            <person name="Burland V."/>
            <person name="Kodoyianni V."/>
            <person name="Schwartz D.C."/>
            <person name="Blattner F.R."/>
        </authorList>
    </citation>
    <scope>NUCLEOTIDE SEQUENCE [LARGE SCALE GENOMIC DNA]</scope>
    <source>
        <strain>ATCC 700931 / Ty2</strain>
    </source>
</reference>
<reference key="2">
    <citation type="journal article" date="2000" name="J. Bacteriol.">
        <title>Genetic and biochemical characterization of Salmonella enterica serovar typhi deoxyribokinase.</title>
        <authorList>
            <person name="Tourneux L."/>
            <person name="Bucurenci N."/>
            <person name="Saveanu C."/>
            <person name="Kaminski P.A."/>
            <person name="Bouzon M."/>
            <person name="Pistotnik E."/>
            <person name="Namane A."/>
            <person name="Marliere P."/>
            <person name="Barzu O."/>
            <person name="Li De La Sierra I."/>
            <person name="Neuhard J."/>
            <person name="Gilles A.M."/>
        </authorList>
    </citation>
    <scope>PROTEIN SEQUENCE OF 1-60</scope>
    <scope>FUNCTION</scope>
    <scope>CATALYTIC ACTIVITY</scope>
    <scope>BIOPHYSICOCHEMICAL PROPERTIES</scope>
    <scope>DOMAIN</scope>
    <scope>MUTAGENESIS OF MET-10</scope>
    <source>
        <strain>ATCC 700931 / Ty2</strain>
    </source>
</reference>
<feature type="chain" id="PRO_0000459681" description="Deoxyribokinase">
    <location>
        <begin position="1"/>
        <end position="306"/>
    </location>
</feature>
<feature type="active site" description="Proton acceptor" evidence="1">
    <location>
        <position position="252"/>
    </location>
</feature>
<feature type="binding site" evidence="1">
    <location>
        <begin position="10"/>
        <end position="12"/>
    </location>
    <ligand>
        <name>substrate</name>
    </ligand>
</feature>
<feature type="binding site" evidence="1">
    <location>
        <begin position="38"/>
        <end position="42"/>
    </location>
    <ligand>
        <name>substrate</name>
    </ligand>
</feature>
<feature type="binding site" evidence="1">
    <location>
        <position position="139"/>
    </location>
    <ligand>
        <name>substrate</name>
    </ligand>
</feature>
<feature type="binding site" evidence="1">
    <location>
        <position position="184"/>
    </location>
    <ligand>
        <name>ATP</name>
        <dbReference type="ChEBI" id="CHEBI:30616"/>
    </ligand>
</feature>
<feature type="binding site" evidence="1">
    <location>
        <begin position="220"/>
        <end position="225"/>
    </location>
    <ligand>
        <name>ATP</name>
        <dbReference type="ChEBI" id="CHEBI:30616"/>
    </ligand>
</feature>
<feature type="binding site" evidence="1">
    <location>
        <position position="246"/>
    </location>
    <ligand>
        <name>K(+)</name>
        <dbReference type="ChEBI" id="CHEBI:29103"/>
    </ligand>
</feature>
<feature type="binding site" evidence="1">
    <location>
        <position position="248"/>
    </location>
    <ligand>
        <name>K(+)</name>
        <dbReference type="ChEBI" id="CHEBI:29103"/>
    </ligand>
</feature>
<feature type="binding site" evidence="1">
    <location>
        <begin position="251"/>
        <end position="252"/>
    </location>
    <ligand>
        <name>ATP</name>
        <dbReference type="ChEBI" id="CHEBI:30616"/>
    </ligand>
</feature>
<feature type="binding site" evidence="1">
    <location>
        <position position="252"/>
    </location>
    <ligand>
        <name>substrate</name>
    </ligand>
</feature>
<feature type="binding site" evidence="1">
    <location>
        <position position="282"/>
    </location>
    <ligand>
        <name>K(+)</name>
        <dbReference type="ChEBI" id="CHEBI:29103"/>
    </ligand>
</feature>
<feature type="binding site" evidence="1">
    <location>
        <position position="285"/>
    </location>
    <ligand>
        <name>K(+)</name>
        <dbReference type="ChEBI" id="CHEBI:29103"/>
    </ligand>
</feature>
<feature type="binding site" evidence="1">
    <location>
        <position position="287"/>
    </location>
    <ligand>
        <name>K(+)</name>
        <dbReference type="ChEBI" id="CHEBI:29103"/>
    </ligand>
</feature>
<feature type="binding site" evidence="1">
    <location>
        <position position="291"/>
    </location>
    <ligand>
        <name>K(+)</name>
        <dbReference type="ChEBI" id="CHEBI:29103"/>
    </ligand>
</feature>
<feature type="site" description="Important for substrate specificity" evidence="1 2">
    <location>
        <position position="10"/>
    </location>
</feature>
<feature type="mutagenesis site" description="2.5-fold decrease in Vmax for deoxyribokinase activity and 70-fold increase in KM for deoxyribose. 2-fold increase in KM for ribose." evidence="2">
    <original>M</original>
    <variation>N</variation>
    <location>
        <position position="10"/>
    </location>
</feature>
<organism>
    <name type="scientific">Salmonella typhi</name>
    <dbReference type="NCBI Taxonomy" id="90370"/>
    <lineage>
        <taxon>Bacteria</taxon>
        <taxon>Pseudomonadati</taxon>
        <taxon>Pseudomonadota</taxon>
        <taxon>Gammaproteobacteria</taxon>
        <taxon>Enterobacterales</taxon>
        <taxon>Enterobacteriaceae</taxon>
        <taxon>Salmonella</taxon>
    </lineage>
</organism>
<keyword id="KW-0067">ATP-binding</keyword>
<keyword id="KW-0119">Carbohydrate metabolism</keyword>
<keyword id="KW-0963">Cytoplasm</keyword>
<keyword id="KW-0903">Direct protein sequencing</keyword>
<keyword id="KW-0418">Kinase</keyword>
<keyword id="KW-0460">Magnesium</keyword>
<keyword id="KW-0479">Metal-binding</keyword>
<keyword id="KW-0547">Nucleotide-binding</keyword>
<keyword id="KW-0630">Potassium</keyword>
<keyword id="KW-0808">Transferase</keyword>
<gene>
    <name evidence="1 3" type="primary">deoK</name>
    <name evidence="5" type="ordered locus">t3725</name>
</gene>
<proteinExistence type="evidence at protein level"/>
<dbReference type="EC" id="2.7.1.229" evidence="1 2"/>
<dbReference type="EMBL" id="AE014613">
    <property type="protein sequence ID" value="AAO71218.1"/>
    <property type="molecule type" value="Genomic_DNA"/>
</dbReference>
<dbReference type="SMR" id="P0DX97"/>
<dbReference type="KEGG" id="stt:t3725"/>
<dbReference type="OMA" id="CFARHYV"/>
<dbReference type="Proteomes" id="UP000002670">
    <property type="component" value="Chromosome"/>
</dbReference>
<dbReference type="GO" id="GO:0005829">
    <property type="term" value="C:cytosol"/>
    <property type="evidence" value="ECO:0007669"/>
    <property type="project" value="TreeGrafter"/>
</dbReference>
<dbReference type="GO" id="GO:0005524">
    <property type="term" value="F:ATP binding"/>
    <property type="evidence" value="ECO:0007669"/>
    <property type="project" value="UniProtKB-UniRule"/>
</dbReference>
<dbReference type="GO" id="GO:0046872">
    <property type="term" value="F:metal ion binding"/>
    <property type="evidence" value="ECO:0007669"/>
    <property type="project" value="UniProtKB-KW"/>
</dbReference>
<dbReference type="GO" id="GO:0004747">
    <property type="term" value="F:ribokinase activity"/>
    <property type="evidence" value="ECO:0007669"/>
    <property type="project" value="InterPro"/>
</dbReference>
<dbReference type="GO" id="GO:0006014">
    <property type="term" value="P:D-ribose metabolic process"/>
    <property type="evidence" value="ECO:0007669"/>
    <property type="project" value="InterPro"/>
</dbReference>
<dbReference type="CDD" id="cd01174">
    <property type="entry name" value="ribokinase"/>
    <property type="match status" value="1"/>
</dbReference>
<dbReference type="FunFam" id="3.40.1190.20:FF:000010">
    <property type="entry name" value="Ribokinase"/>
    <property type="match status" value="1"/>
</dbReference>
<dbReference type="Gene3D" id="3.40.1190.20">
    <property type="match status" value="1"/>
</dbReference>
<dbReference type="HAMAP" id="MF_01987">
    <property type="entry name" value="Ribokinase"/>
    <property type="match status" value="1"/>
</dbReference>
<dbReference type="InterPro" id="IPR011611">
    <property type="entry name" value="PfkB_dom"/>
</dbReference>
<dbReference type="InterPro" id="IPR002139">
    <property type="entry name" value="Ribo/fructo_kinase"/>
</dbReference>
<dbReference type="InterPro" id="IPR011877">
    <property type="entry name" value="Ribokinase"/>
</dbReference>
<dbReference type="InterPro" id="IPR029056">
    <property type="entry name" value="Ribokinase-like"/>
</dbReference>
<dbReference type="NCBIfam" id="TIGR02152">
    <property type="entry name" value="D_ribokin_bact"/>
    <property type="match status" value="1"/>
</dbReference>
<dbReference type="PANTHER" id="PTHR10584:SF166">
    <property type="entry name" value="RIBOKINASE"/>
    <property type="match status" value="1"/>
</dbReference>
<dbReference type="PANTHER" id="PTHR10584">
    <property type="entry name" value="SUGAR KINASE"/>
    <property type="match status" value="1"/>
</dbReference>
<dbReference type="Pfam" id="PF00294">
    <property type="entry name" value="PfkB"/>
    <property type="match status" value="1"/>
</dbReference>
<dbReference type="PRINTS" id="PR00990">
    <property type="entry name" value="RIBOKINASE"/>
</dbReference>
<dbReference type="SUPFAM" id="SSF53613">
    <property type="entry name" value="Ribokinase-like"/>
    <property type="match status" value="1"/>
</dbReference>
<accession>P0DX97</accession>